<sequence>MKKKYRIKKNEEFQEVFRRGVSTANRQFVVYTLDRPEQPYFRIGLSVSKKLGKAVVRNQIKRYVRQCFLELKEEVVPGKDYVIIARQPVAEMGYAEVKKSLLHVLRKAGGLKKRGRTTDLA</sequence>
<name>RNPA_GEOTN</name>
<comment type="function">
    <text evidence="1">RNaseP catalyzes the removal of the 5'-leader sequence from pre-tRNA to produce the mature 5'-terminus. It can also cleave other RNA substrates such as 4.5S RNA. The protein component plays an auxiliary but essential role in vivo by binding to the 5'-leader sequence and broadening the substrate specificity of the ribozyme.</text>
</comment>
<comment type="catalytic activity">
    <reaction evidence="1">
        <text>Endonucleolytic cleavage of RNA, removing 5'-extranucleotides from tRNA precursor.</text>
        <dbReference type="EC" id="3.1.26.5"/>
    </reaction>
</comment>
<comment type="subunit">
    <text evidence="1">Consists of a catalytic RNA component (M1 or rnpB) and a protein subunit.</text>
</comment>
<comment type="similarity">
    <text evidence="1">Belongs to the RnpA family.</text>
</comment>
<gene>
    <name evidence="1" type="primary">rnpA</name>
    <name type="ordered locus">GTNG_3443</name>
</gene>
<protein>
    <recommendedName>
        <fullName evidence="1">Ribonuclease P protein component</fullName>
        <shortName evidence="1">RNase P protein</shortName>
        <shortName evidence="1">RNaseP protein</shortName>
        <ecNumber evidence="1">3.1.26.5</ecNumber>
    </recommendedName>
    <alternativeName>
        <fullName evidence="1">Protein C5</fullName>
    </alternativeName>
</protein>
<dbReference type="EC" id="3.1.26.5" evidence="1"/>
<dbReference type="EMBL" id="CP000557">
    <property type="protein sequence ID" value="ABO68778.1"/>
    <property type="molecule type" value="Genomic_DNA"/>
</dbReference>
<dbReference type="RefSeq" id="WP_011888464.1">
    <property type="nucleotide sequence ID" value="NC_009328.1"/>
</dbReference>
<dbReference type="SMR" id="A4ITX4"/>
<dbReference type="GeneID" id="87622457"/>
<dbReference type="KEGG" id="gtn:GTNG_3443"/>
<dbReference type="eggNOG" id="COG0594">
    <property type="taxonomic scope" value="Bacteria"/>
</dbReference>
<dbReference type="HOGENOM" id="CLU_117179_9_1_9"/>
<dbReference type="Proteomes" id="UP000001578">
    <property type="component" value="Chromosome"/>
</dbReference>
<dbReference type="GO" id="GO:0030677">
    <property type="term" value="C:ribonuclease P complex"/>
    <property type="evidence" value="ECO:0007669"/>
    <property type="project" value="TreeGrafter"/>
</dbReference>
<dbReference type="GO" id="GO:0042781">
    <property type="term" value="F:3'-tRNA processing endoribonuclease activity"/>
    <property type="evidence" value="ECO:0007669"/>
    <property type="project" value="TreeGrafter"/>
</dbReference>
<dbReference type="GO" id="GO:0004526">
    <property type="term" value="F:ribonuclease P activity"/>
    <property type="evidence" value="ECO:0007669"/>
    <property type="project" value="UniProtKB-UniRule"/>
</dbReference>
<dbReference type="GO" id="GO:0000049">
    <property type="term" value="F:tRNA binding"/>
    <property type="evidence" value="ECO:0007669"/>
    <property type="project" value="UniProtKB-UniRule"/>
</dbReference>
<dbReference type="GO" id="GO:0001682">
    <property type="term" value="P:tRNA 5'-leader removal"/>
    <property type="evidence" value="ECO:0007669"/>
    <property type="project" value="UniProtKB-UniRule"/>
</dbReference>
<dbReference type="FunFam" id="3.30.230.10:FF:000021">
    <property type="entry name" value="Ribonuclease P protein component"/>
    <property type="match status" value="1"/>
</dbReference>
<dbReference type="Gene3D" id="3.30.230.10">
    <property type="match status" value="1"/>
</dbReference>
<dbReference type="HAMAP" id="MF_00227">
    <property type="entry name" value="RNase_P"/>
    <property type="match status" value="1"/>
</dbReference>
<dbReference type="InterPro" id="IPR020568">
    <property type="entry name" value="Ribosomal_Su5_D2-typ_SF"/>
</dbReference>
<dbReference type="InterPro" id="IPR014721">
    <property type="entry name" value="Ribsml_uS5_D2-typ_fold_subgr"/>
</dbReference>
<dbReference type="InterPro" id="IPR000100">
    <property type="entry name" value="RNase_P"/>
</dbReference>
<dbReference type="InterPro" id="IPR020539">
    <property type="entry name" value="RNase_P_CS"/>
</dbReference>
<dbReference type="NCBIfam" id="TIGR00188">
    <property type="entry name" value="rnpA"/>
    <property type="match status" value="1"/>
</dbReference>
<dbReference type="PANTHER" id="PTHR33992">
    <property type="entry name" value="RIBONUCLEASE P PROTEIN COMPONENT"/>
    <property type="match status" value="1"/>
</dbReference>
<dbReference type="PANTHER" id="PTHR33992:SF1">
    <property type="entry name" value="RIBONUCLEASE P PROTEIN COMPONENT"/>
    <property type="match status" value="1"/>
</dbReference>
<dbReference type="Pfam" id="PF00825">
    <property type="entry name" value="Ribonuclease_P"/>
    <property type="match status" value="1"/>
</dbReference>
<dbReference type="SUPFAM" id="SSF54211">
    <property type="entry name" value="Ribosomal protein S5 domain 2-like"/>
    <property type="match status" value="1"/>
</dbReference>
<dbReference type="PROSITE" id="PS00648">
    <property type="entry name" value="RIBONUCLEASE_P"/>
    <property type="match status" value="1"/>
</dbReference>
<accession>A4ITX4</accession>
<keyword id="KW-0255">Endonuclease</keyword>
<keyword id="KW-0378">Hydrolase</keyword>
<keyword id="KW-0540">Nuclease</keyword>
<keyword id="KW-0694">RNA-binding</keyword>
<keyword id="KW-0819">tRNA processing</keyword>
<feature type="chain" id="PRO_1000021409" description="Ribonuclease P protein component">
    <location>
        <begin position="1"/>
        <end position="121"/>
    </location>
</feature>
<evidence type="ECO:0000255" key="1">
    <source>
        <dbReference type="HAMAP-Rule" id="MF_00227"/>
    </source>
</evidence>
<reference key="1">
    <citation type="journal article" date="2007" name="Proc. Natl. Acad. Sci. U.S.A.">
        <title>Genome and proteome of long-chain alkane degrading Geobacillus thermodenitrificans NG80-2 isolated from a deep-subsurface oil reservoir.</title>
        <authorList>
            <person name="Feng L."/>
            <person name="Wang W."/>
            <person name="Cheng J."/>
            <person name="Ren Y."/>
            <person name="Zhao G."/>
            <person name="Gao C."/>
            <person name="Tang Y."/>
            <person name="Liu X."/>
            <person name="Han W."/>
            <person name="Peng X."/>
            <person name="Liu R."/>
            <person name="Wang L."/>
        </authorList>
    </citation>
    <scope>NUCLEOTIDE SEQUENCE [LARGE SCALE GENOMIC DNA]</scope>
    <source>
        <strain>NG80-2</strain>
    </source>
</reference>
<organism>
    <name type="scientific">Geobacillus thermodenitrificans (strain NG80-2)</name>
    <dbReference type="NCBI Taxonomy" id="420246"/>
    <lineage>
        <taxon>Bacteria</taxon>
        <taxon>Bacillati</taxon>
        <taxon>Bacillota</taxon>
        <taxon>Bacilli</taxon>
        <taxon>Bacillales</taxon>
        <taxon>Anoxybacillaceae</taxon>
        <taxon>Geobacillus</taxon>
    </lineage>
</organism>
<proteinExistence type="inferred from homology"/>